<gene>
    <name type="ordered locus">SEQ_1136</name>
</gene>
<dbReference type="EMBL" id="FM204883">
    <property type="protein sequence ID" value="CAW93813.1"/>
    <property type="molecule type" value="Genomic_DNA"/>
</dbReference>
<dbReference type="SMR" id="C0MA71"/>
<dbReference type="KEGG" id="seu:SEQ_1136"/>
<dbReference type="HOGENOM" id="CLU_073529_0_2_9"/>
<dbReference type="OrthoDB" id="9804482at2"/>
<dbReference type="Proteomes" id="UP000001365">
    <property type="component" value="Chromosome"/>
</dbReference>
<dbReference type="GO" id="GO:0046872">
    <property type="term" value="F:metal ion binding"/>
    <property type="evidence" value="ECO:0007669"/>
    <property type="project" value="UniProtKB-KW"/>
</dbReference>
<dbReference type="GO" id="GO:0008237">
    <property type="term" value="F:metallopeptidase activity"/>
    <property type="evidence" value="ECO:0007669"/>
    <property type="project" value="UniProtKB-KW"/>
</dbReference>
<dbReference type="GO" id="GO:0006508">
    <property type="term" value="P:proteolysis"/>
    <property type="evidence" value="ECO:0007669"/>
    <property type="project" value="UniProtKB-KW"/>
</dbReference>
<dbReference type="CDD" id="cd08071">
    <property type="entry name" value="MPN_DUF2466"/>
    <property type="match status" value="1"/>
</dbReference>
<dbReference type="Gene3D" id="3.40.140.10">
    <property type="entry name" value="Cytidine Deaminase, domain 2"/>
    <property type="match status" value="1"/>
</dbReference>
<dbReference type="InterPro" id="IPR037518">
    <property type="entry name" value="MPN"/>
</dbReference>
<dbReference type="InterPro" id="IPR025657">
    <property type="entry name" value="RadC_JAB"/>
</dbReference>
<dbReference type="InterPro" id="IPR010994">
    <property type="entry name" value="RuvA_2-like"/>
</dbReference>
<dbReference type="InterPro" id="IPR001405">
    <property type="entry name" value="UPF0758"/>
</dbReference>
<dbReference type="InterPro" id="IPR020891">
    <property type="entry name" value="UPF0758_CS"/>
</dbReference>
<dbReference type="InterPro" id="IPR046778">
    <property type="entry name" value="UPF0758_N"/>
</dbReference>
<dbReference type="NCBIfam" id="NF000642">
    <property type="entry name" value="PRK00024.1"/>
    <property type="match status" value="1"/>
</dbReference>
<dbReference type="NCBIfam" id="TIGR00608">
    <property type="entry name" value="radc"/>
    <property type="match status" value="1"/>
</dbReference>
<dbReference type="PANTHER" id="PTHR30471">
    <property type="entry name" value="DNA REPAIR PROTEIN RADC"/>
    <property type="match status" value="1"/>
</dbReference>
<dbReference type="PANTHER" id="PTHR30471:SF3">
    <property type="entry name" value="UPF0758 PROTEIN YEES-RELATED"/>
    <property type="match status" value="1"/>
</dbReference>
<dbReference type="Pfam" id="PF04002">
    <property type="entry name" value="RadC"/>
    <property type="match status" value="1"/>
</dbReference>
<dbReference type="Pfam" id="PF20582">
    <property type="entry name" value="UPF0758_N"/>
    <property type="match status" value="1"/>
</dbReference>
<dbReference type="SUPFAM" id="SSF47781">
    <property type="entry name" value="RuvA domain 2-like"/>
    <property type="match status" value="1"/>
</dbReference>
<dbReference type="PROSITE" id="PS50249">
    <property type="entry name" value="MPN"/>
    <property type="match status" value="1"/>
</dbReference>
<dbReference type="PROSITE" id="PS01302">
    <property type="entry name" value="UPF0758"/>
    <property type="match status" value="1"/>
</dbReference>
<keyword id="KW-0378">Hydrolase</keyword>
<keyword id="KW-0479">Metal-binding</keyword>
<keyword id="KW-0482">Metalloprotease</keyword>
<keyword id="KW-0645">Protease</keyword>
<keyword id="KW-0862">Zinc</keyword>
<accession>C0MA71</accession>
<comment type="similarity">
    <text evidence="2">Belongs to the UPF0758 family.</text>
</comment>
<name>Y1136_STRE4</name>
<organism>
    <name type="scientific">Streptococcus equi subsp. equi (strain 4047)</name>
    <dbReference type="NCBI Taxonomy" id="553482"/>
    <lineage>
        <taxon>Bacteria</taxon>
        <taxon>Bacillati</taxon>
        <taxon>Bacillota</taxon>
        <taxon>Bacilli</taxon>
        <taxon>Lactobacillales</taxon>
        <taxon>Streptococcaceae</taxon>
        <taxon>Streptococcus</taxon>
    </lineage>
</organism>
<sequence>MYSIKTDHKLMPRERLIRLGPEKLSNQEQLAILLRTGNKEKHVLELSAYLLSSLDSLADLKKFSLQELQRLSGIGKVKAIEIKAMLELADRIQIAGQAVADPVLSSAQVAEKMMIELGDKQQEHLVAIYLDSQNKIIEEKTIFIGTVRKSIAEPREILYYACKNMATSLIVVHNHPSGLTKPSANDYHFTEKIKRSCDYLGLICLDHIIVSKYDYYSFREKSDLF</sequence>
<proteinExistence type="inferred from homology"/>
<feature type="chain" id="PRO_1000195306" description="UPF0758 protein SEQ_1136">
    <location>
        <begin position="1"/>
        <end position="225"/>
    </location>
</feature>
<feature type="domain" description="MPN" evidence="1">
    <location>
        <begin position="102"/>
        <end position="224"/>
    </location>
</feature>
<feature type="short sequence motif" description="JAMM motif" evidence="1">
    <location>
        <begin position="173"/>
        <end position="186"/>
    </location>
</feature>
<feature type="binding site" evidence="1">
    <location>
        <position position="173"/>
    </location>
    <ligand>
        <name>Zn(2+)</name>
        <dbReference type="ChEBI" id="CHEBI:29105"/>
        <note>catalytic</note>
    </ligand>
</feature>
<feature type="binding site" evidence="1">
    <location>
        <position position="175"/>
    </location>
    <ligand>
        <name>Zn(2+)</name>
        <dbReference type="ChEBI" id="CHEBI:29105"/>
        <note>catalytic</note>
    </ligand>
</feature>
<feature type="binding site" evidence="1">
    <location>
        <position position="186"/>
    </location>
    <ligand>
        <name>Zn(2+)</name>
        <dbReference type="ChEBI" id="CHEBI:29105"/>
        <note>catalytic</note>
    </ligand>
</feature>
<protein>
    <recommendedName>
        <fullName>UPF0758 protein SEQ_1136</fullName>
    </recommendedName>
</protein>
<reference key="1">
    <citation type="journal article" date="2009" name="PLoS Pathog.">
        <title>Genomic evidence for the evolution of Streptococcus equi: host restriction, increased virulence, and genetic exchange with human pathogens.</title>
        <authorList>
            <person name="Holden M.T.G."/>
            <person name="Heather Z."/>
            <person name="Paillot R."/>
            <person name="Steward K.F."/>
            <person name="Webb K."/>
            <person name="Ainslie F."/>
            <person name="Jourdan T."/>
            <person name="Bason N.C."/>
            <person name="Holroyd N.E."/>
            <person name="Mungall K."/>
            <person name="Quail M.A."/>
            <person name="Sanders M."/>
            <person name="Simmonds M."/>
            <person name="Willey D."/>
            <person name="Brooks K."/>
            <person name="Aanensen D.M."/>
            <person name="Spratt B.G."/>
            <person name="Jolley K.A."/>
            <person name="Maiden M.C.J."/>
            <person name="Kehoe M."/>
            <person name="Chanter N."/>
            <person name="Bentley S.D."/>
            <person name="Robinson C."/>
            <person name="Maskell D.J."/>
            <person name="Parkhill J."/>
            <person name="Waller A.S."/>
        </authorList>
    </citation>
    <scope>NUCLEOTIDE SEQUENCE [LARGE SCALE GENOMIC DNA]</scope>
    <source>
        <strain>4047</strain>
    </source>
</reference>
<evidence type="ECO:0000255" key="1">
    <source>
        <dbReference type="PROSITE-ProRule" id="PRU01182"/>
    </source>
</evidence>
<evidence type="ECO:0000305" key="2"/>